<gene>
    <name evidence="1" type="primary">metJ</name>
    <name type="ordered locus">EcHS_A4173</name>
</gene>
<comment type="function">
    <text evidence="1">This regulatory protein, when combined with SAM (S-adenosylmethionine) represses the expression of the methionine regulon and of enzymes involved in SAM synthesis.</text>
</comment>
<comment type="subunit">
    <text evidence="1">Homodimer.</text>
</comment>
<comment type="subcellular location">
    <subcellularLocation>
        <location evidence="1">Cytoplasm</location>
    </subcellularLocation>
</comment>
<comment type="domain">
    <text>Does not bind DNA by a helix-turn-helix motif.</text>
</comment>
<comment type="similarity">
    <text evidence="1">Belongs to the MetJ family.</text>
</comment>
<sequence>MAEWSGEYISPYAEHGKKSEQVKKITVSIPLKVLKILTDERTRRQVNNLRHATNSELLCEAFLHAFTGQPLPDDADLRKERSDEIPEAAKEIMREMGINPETWEY</sequence>
<evidence type="ECO:0000255" key="1">
    <source>
        <dbReference type="HAMAP-Rule" id="MF_00744"/>
    </source>
</evidence>
<protein>
    <recommendedName>
        <fullName evidence="1">Met repressor</fullName>
    </recommendedName>
    <alternativeName>
        <fullName evidence="1">Met regulon regulatory protein MetJ</fullName>
    </alternativeName>
</protein>
<name>METJ_ECOHS</name>
<accession>A8A746</accession>
<reference key="1">
    <citation type="journal article" date="2008" name="J. Bacteriol.">
        <title>The pangenome structure of Escherichia coli: comparative genomic analysis of E. coli commensal and pathogenic isolates.</title>
        <authorList>
            <person name="Rasko D.A."/>
            <person name="Rosovitz M.J."/>
            <person name="Myers G.S.A."/>
            <person name="Mongodin E.F."/>
            <person name="Fricke W.F."/>
            <person name="Gajer P."/>
            <person name="Crabtree J."/>
            <person name="Sebaihia M."/>
            <person name="Thomson N.R."/>
            <person name="Chaudhuri R."/>
            <person name="Henderson I.R."/>
            <person name="Sperandio V."/>
            <person name="Ravel J."/>
        </authorList>
    </citation>
    <scope>NUCLEOTIDE SEQUENCE [LARGE SCALE GENOMIC DNA]</scope>
    <source>
        <strain>HS</strain>
    </source>
</reference>
<keyword id="KW-0028">Amino-acid biosynthesis</keyword>
<keyword id="KW-0963">Cytoplasm</keyword>
<keyword id="KW-0238">DNA-binding</keyword>
<keyword id="KW-0486">Methionine biosynthesis</keyword>
<keyword id="KW-0678">Repressor</keyword>
<keyword id="KW-0804">Transcription</keyword>
<keyword id="KW-0805">Transcription regulation</keyword>
<organism>
    <name type="scientific">Escherichia coli O9:H4 (strain HS)</name>
    <dbReference type="NCBI Taxonomy" id="331112"/>
    <lineage>
        <taxon>Bacteria</taxon>
        <taxon>Pseudomonadati</taxon>
        <taxon>Pseudomonadota</taxon>
        <taxon>Gammaproteobacteria</taxon>
        <taxon>Enterobacterales</taxon>
        <taxon>Enterobacteriaceae</taxon>
        <taxon>Escherichia</taxon>
    </lineage>
</organism>
<proteinExistence type="inferred from homology"/>
<dbReference type="EMBL" id="CP000802">
    <property type="protein sequence ID" value="ABV08350.1"/>
    <property type="molecule type" value="Genomic_DNA"/>
</dbReference>
<dbReference type="RefSeq" id="WP_000852812.1">
    <property type="nucleotide sequence ID" value="NC_009800.1"/>
</dbReference>
<dbReference type="SMR" id="A8A746"/>
<dbReference type="GeneID" id="93777954"/>
<dbReference type="KEGG" id="ecx:EcHS_A4173"/>
<dbReference type="HOGENOM" id="CLU_142318_0_0_6"/>
<dbReference type="GO" id="GO:0005737">
    <property type="term" value="C:cytoplasm"/>
    <property type="evidence" value="ECO:0007669"/>
    <property type="project" value="UniProtKB-SubCell"/>
</dbReference>
<dbReference type="GO" id="GO:0003677">
    <property type="term" value="F:DNA binding"/>
    <property type="evidence" value="ECO:0007669"/>
    <property type="project" value="UniProtKB-KW"/>
</dbReference>
<dbReference type="GO" id="GO:0003700">
    <property type="term" value="F:DNA-binding transcription factor activity"/>
    <property type="evidence" value="ECO:0007669"/>
    <property type="project" value="InterPro"/>
</dbReference>
<dbReference type="GO" id="GO:0009086">
    <property type="term" value="P:methionine biosynthetic process"/>
    <property type="evidence" value="ECO:0007669"/>
    <property type="project" value="UniProtKB-UniRule"/>
</dbReference>
<dbReference type="GO" id="GO:0045892">
    <property type="term" value="P:negative regulation of DNA-templated transcription"/>
    <property type="evidence" value="ECO:0007669"/>
    <property type="project" value="UniProtKB-UniRule"/>
</dbReference>
<dbReference type="CDD" id="cd00490">
    <property type="entry name" value="Met_repressor_MetJ"/>
    <property type="match status" value="1"/>
</dbReference>
<dbReference type="FunFam" id="1.10.140.10:FF:000001">
    <property type="entry name" value="Met repressor"/>
    <property type="match status" value="1"/>
</dbReference>
<dbReference type="Gene3D" id="1.10.140.10">
    <property type="entry name" value="MET Apo-Repressor, subunit A"/>
    <property type="match status" value="1"/>
</dbReference>
<dbReference type="HAMAP" id="MF_00744">
    <property type="entry name" value="MetJ"/>
    <property type="match status" value="1"/>
</dbReference>
<dbReference type="InterPro" id="IPR002084">
    <property type="entry name" value="Met_repressor_MetJ"/>
</dbReference>
<dbReference type="InterPro" id="IPR023453">
    <property type="entry name" value="Met_repressor_MetJ_dom_sf"/>
</dbReference>
<dbReference type="InterPro" id="IPR010985">
    <property type="entry name" value="Ribbon_hlx_hlx"/>
</dbReference>
<dbReference type="NCBIfam" id="NF003622">
    <property type="entry name" value="PRK05264.1"/>
    <property type="match status" value="1"/>
</dbReference>
<dbReference type="Pfam" id="PF01340">
    <property type="entry name" value="MetJ"/>
    <property type="match status" value="1"/>
</dbReference>
<dbReference type="SUPFAM" id="SSF47598">
    <property type="entry name" value="Ribbon-helix-helix"/>
    <property type="match status" value="1"/>
</dbReference>
<feature type="chain" id="PRO_1000062171" description="Met repressor">
    <location>
        <begin position="1"/>
        <end position="105"/>
    </location>
</feature>